<sequence length="124" mass="13477">MILVDTSVWIEHLRAADARLVELLGDDEAGCHPLVIEELALGSIKQRDVVLDLLANLYQFPVVTHDEVLRLVGRRRLWGRGLGAVDANLLGSVALVGGARLWTRDKRLKAACAESGVALAEEVS</sequence>
<gene>
    <name evidence="1" type="primary">vapC32</name>
    <name type="ordered locus">MT1144</name>
</gene>
<comment type="function">
    <text evidence="1">Toxic component of a type II toxin-antitoxin (TA) system. An RNase. Its toxic effect is neutralized by coexpression with cognate antitoxin VapB32 (By similarity).</text>
</comment>
<comment type="cofactor">
    <cofactor evidence="1">
        <name>Mg(2+)</name>
        <dbReference type="ChEBI" id="CHEBI:18420"/>
    </cofactor>
</comment>
<comment type="similarity">
    <text evidence="1">Belongs to the PINc/VapC protein family.</text>
</comment>
<feature type="chain" id="PRO_0000428589" description="Ribonuclease VapC32">
    <location>
        <begin position="1"/>
        <end position="124"/>
    </location>
</feature>
<feature type="domain" description="PINc" evidence="1">
    <location>
        <begin position="2"/>
        <end position="112"/>
    </location>
</feature>
<feature type="binding site" evidence="1">
    <location>
        <position position="5"/>
    </location>
    <ligand>
        <name>Mg(2+)</name>
        <dbReference type="ChEBI" id="CHEBI:18420"/>
    </ligand>
</feature>
<feature type="binding site" evidence="1">
    <location>
        <position position="86"/>
    </location>
    <ligand>
        <name>Mg(2+)</name>
        <dbReference type="ChEBI" id="CHEBI:18420"/>
    </ligand>
</feature>
<organism>
    <name type="scientific">Mycobacterium tuberculosis (strain CDC 1551 / Oshkosh)</name>
    <dbReference type="NCBI Taxonomy" id="83331"/>
    <lineage>
        <taxon>Bacteria</taxon>
        <taxon>Bacillati</taxon>
        <taxon>Actinomycetota</taxon>
        <taxon>Actinomycetes</taxon>
        <taxon>Mycobacteriales</taxon>
        <taxon>Mycobacteriaceae</taxon>
        <taxon>Mycobacterium</taxon>
        <taxon>Mycobacterium tuberculosis complex</taxon>
    </lineage>
</organism>
<accession>P9WF72</accession>
<accession>L0T8Q2</accession>
<accession>O06566</accession>
<accession>Q7D8U2</accession>
<evidence type="ECO:0000255" key="1">
    <source>
        <dbReference type="HAMAP-Rule" id="MF_00265"/>
    </source>
</evidence>
<proteinExistence type="inferred from homology"/>
<reference key="1">
    <citation type="journal article" date="2002" name="J. Bacteriol.">
        <title>Whole-genome comparison of Mycobacterium tuberculosis clinical and laboratory strains.</title>
        <authorList>
            <person name="Fleischmann R.D."/>
            <person name="Alland D."/>
            <person name="Eisen J.A."/>
            <person name="Carpenter L."/>
            <person name="White O."/>
            <person name="Peterson J.D."/>
            <person name="DeBoy R.T."/>
            <person name="Dodson R.J."/>
            <person name="Gwinn M.L."/>
            <person name="Haft D.H."/>
            <person name="Hickey E.K."/>
            <person name="Kolonay J.F."/>
            <person name="Nelson W.C."/>
            <person name="Umayam L.A."/>
            <person name="Ermolaeva M.D."/>
            <person name="Salzberg S.L."/>
            <person name="Delcher A."/>
            <person name="Utterback T.R."/>
            <person name="Weidman J.F."/>
            <person name="Khouri H.M."/>
            <person name="Gill J."/>
            <person name="Mikula A."/>
            <person name="Bishai W."/>
            <person name="Jacobs W.R. Jr."/>
            <person name="Venter J.C."/>
            <person name="Fraser C.M."/>
        </authorList>
    </citation>
    <scope>NUCLEOTIDE SEQUENCE [LARGE SCALE GENOMIC DNA]</scope>
    <source>
        <strain>CDC 1551 / Oshkosh</strain>
    </source>
</reference>
<protein>
    <recommendedName>
        <fullName evidence="1">Ribonuclease VapC32</fullName>
        <shortName evidence="1">RNase VapC32</shortName>
        <ecNumber evidence="1">3.1.-.-</ecNumber>
    </recommendedName>
    <alternativeName>
        <fullName evidence="1">Toxin VapC32</fullName>
    </alternativeName>
</protein>
<keyword id="KW-0378">Hydrolase</keyword>
<keyword id="KW-0460">Magnesium</keyword>
<keyword id="KW-0479">Metal-binding</keyword>
<keyword id="KW-0540">Nuclease</keyword>
<keyword id="KW-1185">Reference proteome</keyword>
<keyword id="KW-1277">Toxin-antitoxin system</keyword>
<dbReference type="EC" id="3.1.-.-" evidence="1"/>
<dbReference type="EMBL" id="AE000516">
    <property type="protein sequence ID" value="AAK45402.1"/>
    <property type="molecule type" value="Genomic_DNA"/>
</dbReference>
<dbReference type="PIR" id="C70537">
    <property type="entry name" value="C70537"/>
</dbReference>
<dbReference type="RefSeq" id="WP_003405865.1">
    <property type="nucleotide sequence ID" value="NZ_KK341227.1"/>
</dbReference>
<dbReference type="SMR" id="P9WF72"/>
<dbReference type="KEGG" id="mtc:MT1144"/>
<dbReference type="PATRIC" id="fig|83331.31.peg.1237"/>
<dbReference type="HOGENOM" id="CLU_147393_0_0_11"/>
<dbReference type="Proteomes" id="UP000001020">
    <property type="component" value="Chromosome"/>
</dbReference>
<dbReference type="GO" id="GO:0000287">
    <property type="term" value="F:magnesium ion binding"/>
    <property type="evidence" value="ECO:0007669"/>
    <property type="project" value="UniProtKB-UniRule"/>
</dbReference>
<dbReference type="GO" id="GO:0004540">
    <property type="term" value="F:RNA nuclease activity"/>
    <property type="evidence" value="ECO:0007669"/>
    <property type="project" value="InterPro"/>
</dbReference>
<dbReference type="Gene3D" id="3.40.50.1010">
    <property type="entry name" value="5'-nuclease"/>
    <property type="match status" value="1"/>
</dbReference>
<dbReference type="HAMAP" id="MF_00265">
    <property type="entry name" value="VapC_Nob1"/>
    <property type="match status" value="1"/>
</dbReference>
<dbReference type="InterPro" id="IPR029060">
    <property type="entry name" value="PIN-like_dom_sf"/>
</dbReference>
<dbReference type="InterPro" id="IPR002716">
    <property type="entry name" value="PIN_dom"/>
</dbReference>
<dbReference type="InterPro" id="IPR022907">
    <property type="entry name" value="VapC_family"/>
</dbReference>
<dbReference type="Pfam" id="PF01850">
    <property type="entry name" value="PIN"/>
    <property type="match status" value="1"/>
</dbReference>
<dbReference type="SUPFAM" id="SSF88723">
    <property type="entry name" value="PIN domain-like"/>
    <property type="match status" value="1"/>
</dbReference>
<name>VPC32_MYCTO</name>